<reference key="1">
    <citation type="journal article" date="1994" name="J. Bacteriol.">
        <title>Insertional activation of cepA leads to high-level beta-lactamase expression in Bacteroides fragilis clinical isolates.</title>
        <authorList>
            <person name="Rogers M.B."/>
            <person name="Bennett T.K."/>
            <person name="Payne C.M."/>
            <person name="Smith C.J."/>
        </authorList>
    </citation>
    <scope>NUCLEOTIDE SEQUENCE [GENOMIC DNA]</scope>
    <source>
        <strain>RBF-103</strain>
    </source>
</reference>
<dbReference type="EMBL" id="U05888">
    <property type="protein sequence ID" value="AAA21539.1"/>
    <property type="molecule type" value="Genomic_DNA"/>
</dbReference>
<dbReference type="PIR" id="I40199">
    <property type="entry name" value="I40199"/>
</dbReference>
<dbReference type="SMR" id="Q45120"/>
<dbReference type="GO" id="GO:0005524">
    <property type="term" value="F:ATP binding"/>
    <property type="evidence" value="ECO:0007669"/>
    <property type="project" value="UniProtKB-KW"/>
</dbReference>
<dbReference type="GO" id="GO:0016887">
    <property type="term" value="F:ATP hydrolysis activity"/>
    <property type="evidence" value="ECO:0007669"/>
    <property type="project" value="InterPro"/>
</dbReference>
<dbReference type="GO" id="GO:0006260">
    <property type="term" value="P:DNA replication"/>
    <property type="evidence" value="ECO:0007669"/>
    <property type="project" value="TreeGrafter"/>
</dbReference>
<dbReference type="CDD" id="cd00009">
    <property type="entry name" value="AAA"/>
    <property type="match status" value="1"/>
</dbReference>
<dbReference type="Gene3D" id="3.40.50.300">
    <property type="entry name" value="P-loop containing nucleotide triphosphate hydrolases"/>
    <property type="match status" value="1"/>
</dbReference>
<dbReference type="InterPro" id="IPR003593">
    <property type="entry name" value="AAA+_ATPase"/>
</dbReference>
<dbReference type="InterPro" id="IPR028350">
    <property type="entry name" value="DNAC/IstB-like"/>
</dbReference>
<dbReference type="InterPro" id="IPR047661">
    <property type="entry name" value="IstB"/>
</dbReference>
<dbReference type="InterPro" id="IPR002611">
    <property type="entry name" value="IstB_ATP-bd"/>
</dbReference>
<dbReference type="InterPro" id="IPR027417">
    <property type="entry name" value="P-loop_NTPase"/>
</dbReference>
<dbReference type="NCBIfam" id="NF038214">
    <property type="entry name" value="IS21_help_AAA"/>
    <property type="match status" value="1"/>
</dbReference>
<dbReference type="PANTHER" id="PTHR30050:SF4">
    <property type="entry name" value="ATP-BINDING PROTEIN RV3427C IN INSERTION SEQUENCE-RELATED"/>
    <property type="match status" value="1"/>
</dbReference>
<dbReference type="PANTHER" id="PTHR30050">
    <property type="entry name" value="CHROMOSOMAL REPLICATION INITIATOR PROTEIN DNAA"/>
    <property type="match status" value="1"/>
</dbReference>
<dbReference type="Pfam" id="PF01695">
    <property type="entry name" value="IstB_IS21"/>
    <property type="match status" value="1"/>
</dbReference>
<dbReference type="PIRSF" id="PIRSF003073">
    <property type="entry name" value="DNAC_TnpB_IstB"/>
    <property type="match status" value="1"/>
</dbReference>
<dbReference type="SMART" id="SM00382">
    <property type="entry name" value="AAA"/>
    <property type="match status" value="1"/>
</dbReference>
<dbReference type="SUPFAM" id="SSF52540">
    <property type="entry name" value="P-loop containing nucleoside triphosphate hydrolases"/>
    <property type="match status" value="1"/>
</dbReference>
<gene>
    <name type="primary">tnpB</name>
</gene>
<feature type="chain" id="PRO_0000075476" description="Insertion sequence IS21-like putative ATP-binding protein">
    <location>
        <begin position="1"/>
        <end position="263"/>
    </location>
</feature>
<feature type="binding site" evidence="1">
    <location>
        <begin position="114"/>
        <end position="121"/>
    </location>
    <ligand>
        <name>ATP</name>
        <dbReference type="ChEBI" id="CHEBI:30616"/>
    </ligand>
</feature>
<accession>Q45120</accession>
<evidence type="ECO:0000255" key="1"/>
<evidence type="ECO:0000305" key="2"/>
<comment type="similarity">
    <text evidence="2">Belongs to the IS21/IS1162 putative ATP-binding protein family.</text>
</comment>
<name>ISTB_BACFG</name>
<proteinExistence type="inferred from homology"/>
<keyword id="KW-0067">ATP-binding</keyword>
<keyword id="KW-0547">Nucleotide-binding</keyword>
<keyword id="KW-0814">Transposable element</keyword>
<organism>
    <name type="scientific">Bacteroides fragilis</name>
    <dbReference type="NCBI Taxonomy" id="817"/>
    <lineage>
        <taxon>Bacteria</taxon>
        <taxon>Pseudomonadati</taxon>
        <taxon>Bacteroidota</taxon>
        <taxon>Bacteroidia</taxon>
        <taxon>Bacteroidales</taxon>
        <taxon>Bacteroidaceae</taxon>
        <taxon>Bacteroides</taxon>
    </lineage>
</organism>
<sequence>MKSSMAMIKHKKELVEYARHLKLPNLAEHVGVILHEAQEKQLTYSEFLANCLAREIQGRERKSYLTRLKLSGLPAKYDLDLYDYDRAEGMDNRRLRELRELVWVNQAYNLLLVGPSGTGKTFIAAGLVYEAVKAGYEAYLMTLEELLTCLKTKEVSAHAMKTYKRIMKARLLAIDDATLFPLKREEAVLLFKLVNDFQERTSLIITANKALTRWLETLEDEAVTAALLDRLLYCCEIIRLGGTSYRMQNRKTIFSNQNTDIGT</sequence>
<protein>
    <recommendedName>
        <fullName>Insertion sequence IS21-like putative ATP-binding protein</fullName>
    </recommendedName>
</protein>